<sequence>MIKDMIDSIEQFAQTQADFPVYDCLGERRTYGQLKRDSDSIAAFIDSLALLAKSPVLVFGAQTYDMLATFVALTKSGHAYIPVDVHSAPERILAIIEIAKPSLIIAIEEFPLTIEGISLVSLSEIESAKLAEMPYERTHSVKGDDNYYIIFTSGTTGQPKGVQISHDNLLSFTNWMIEDAAFDVPKQPQMLAQPPYSFDLSVMYWAPTLALGGTLFALPKELVADFKQLFTTIAQLPVGIWTSTPSFADMAMLSDDFCQARMPALTHFYFDGEELTVSTARKLFERFPSAKIINAYGPTEATVALSAIEITREMVDNYTRLPIGYPKPDSPTYIIDEDGKELASGEQGEIIVTGPAVSKGYLNNPEKTAEAFFTFKGQPAYHTGDIGSLTEDNILLYGGRLDFQIKYAGYRIELEDVSQQLNQSPMVASAVAVPRYNKEHKVQNLLAYIVVKDGVKERFDRELELTKAIKASVKDHMMSYMMPSKFLYRDSLPLTPNGKIDIKTLINEVNNR</sequence>
<dbReference type="EC" id="6.2.1.54" evidence="1"/>
<dbReference type="EMBL" id="CP000262">
    <property type="protein sequence ID" value="ABF38116.1"/>
    <property type="molecule type" value="Genomic_DNA"/>
</dbReference>
<dbReference type="SMR" id="Q1J667"/>
<dbReference type="KEGG" id="spi:MGAS10750_Spy1166"/>
<dbReference type="HOGENOM" id="CLU_000022_2_12_9"/>
<dbReference type="UniPathway" id="UPA00556"/>
<dbReference type="Proteomes" id="UP000002434">
    <property type="component" value="Chromosome"/>
</dbReference>
<dbReference type="GO" id="GO:0005737">
    <property type="term" value="C:cytoplasm"/>
    <property type="evidence" value="ECO:0007669"/>
    <property type="project" value="UniProtKB-SubCell"/>
</dbReference>
<dbReference type="GO" id="GO:0005524">
    <property type="term" value="F:ATP binding"/>
    <property type="evidence" value="ECO:0007669"/>
    <property type="project" value="UniProtKB-KW"/>
</dbReference>
<dbReference type="GO" id="GO:0047473">
    <property type="term" value="F:D-alanine [D-alanyl carrier protein] ligase activity"/>
    <property type="evidence" value="ECO:0007669"/>
    <property type="project" value="UniProtKB-UniRule"/>
</dbReference>
<dbReference type="GO" id="GO:0070395">
    <property type="term" value="P:lipoteichoic acid biosynthetic process"/>
    <property type="evidence" value="ECO:0007669"/>
    <property type="project" value="UniProtKB-UniRule"/>
</dbReference>
<dbReference type="CDD" id="cd05945">
    <property type="entry name" value="DltA"/>
    <property type="match status" value="1"/>
</dbReference>
<dbReference type="FunFam" id="3.30.300.30:FF:000012">
    <property type="entry name" value="D-alanine--D-alanyl carrier protein ligase"/>
    <property type="match status" value="1"/>
</dbReference>
<dbReference type="Gene3D" id="3.30.300.30">
    <property type="match status" value="1"/>
</dbReference>
<dbReference type="Gene3D" id="3.40.50.12780">
    <property type="entry name" value="N-terminal domain of ligase-like"/>
    <property type="match status" value="1"/>
</dbReference>
<dbReference type="HAMAP" id="MF_00593">
    <property type="entry name" value="DltA"/>
    <property type="match status" value="1"/>
</dbReference>
<dbReference type="InterPro" id="IPR010071">
    <property type="entry name" value="AA_adenyl_dom"/>
</dbReference>
<dbReference type="InterPro" id="IPR025110">
    <property type="entry name" value="AMP-bd_C"/>
</dbReference>
<dbReference type="InterPro" id="IPR045851">
    <property type="entry name" value="AMP-bd_C_sf"/>
</dbReference>
<dbReference type="InterPro" id="IPR020845">
    <property type="entry name" value="AMP-binding_CS"/>
</dbReference>
<dbReference type="InterPro" id="IPR000873">
    <property type="entry name" value="AMP-dep_synth/lig_dom"/>
</dbReference>
<dbReference type="InterPro" id="IPR042099">
    <property type="entry name" value="ANL_N_sf"/>
</dbReference>
<dbReference type="InterPro" id="IPR010072">
    <property type="entry name" value="DltA"/>
</dbReference>
<dbReference type="InterPro" id="IPR044507">
    <property type="entry name" value="DltA-like"/>
</dbReference>
<dbReference type="NCBIfam" id="TIGR01733">
    <property type="entry name" value="AA-adenyl-dom"/>
    <property type="match status" value="1"/>
</dbReference>
<dbReference type="NCBIfam" id="TIGR01734">
    <property type="entry name" value="D-ala-DACP-lig"/>
    <property type="match status" value="1"/>
</dbReference>
<dbReference type="NCBIfam" id="NF003417">
    <property type="entry name" value="PRK04813.1"/>
    <property type="match status" value="1"/>
</dbReference>
<dbReference type="PANTHER" id="PTHR45398">
    <property type="match status" value="1"/>
</dbReference>
<dbReference type="PANTHER" id="PTHR45398:SF1">
    <property type="entry name" value="ENZYME, PUTATIVE (JCVI)-RELATED"/>
    <property type="match status" value="1"/>
</dbReference>
<dbReference type="Pfam" id="PF00501">
    <property type="entry name" value="AMP-binding"/>
    <property type="match status" value="1"/>
</dbReference>
<dbReference type="Pfam" id="PF13193">
    <property type="entry name" value="AMP-binding_C"/>
    <property type="match status" value="1"/>
</dbReference>
<dbReference type="SUPFAM" id="SSF56801">
    <property type="entry name" value="Acetyl-CoA synthetase-like"/>
    <property type="match status" value="1"/>
</dbReference>
<dbReference type="PROSITE" id="PS00455">
    <property type="entry name" value="AMP_BINDING"/>
    <property type="match status" value="1"/>
</dbReference>
<feature type="chain" id="PRO_1000025539" description="D-alanine--D-alanyl carrier protein ligase">
    <location>
        <begin position="1"/>
        <end position="512"/>
    </location>
</feature>
<feature type="binding site" evidence="1">
    <location>
        <begin position="152"/>
        <end position="153"/>
    </location>
    <ligand>
        <name>ATP</name>
        <dbReference type="ChEBI" id="CHEBI:30616"/>
    </ligand>
</feature>
<feature type="binding site" evidence="1">
    <location>
        <position position="199"/>
    </location>
    <ligand>
        <name>D-alanine</name>
        <dbReference type="ChEBI" id="CHEBI:57416"/>
    </ligand>
</feature>
<feature type="binding site" evidence="1">
    <location>
        <begin position="294"/>
        <end position="299"/>
    </location>
    <ligand>
        <name>ATP</name>
        <dbReference type="ChEBI" id="CHEBI:30616"/>
    </ligand>
</feature>
<feature type="binding site" evidence="1">
    <location>
        <position position="303"/>
    </location>
    <ligand>
        <name>D-alanine</name>
        <dbReference type="ChEBI" id="CHEBI:57416"/>
    </ligand>
</feature>
<feature type="binding site" evidence="1">
    <location>
        <position position="385"/>
    </location>
    <ligand>
        <name>ATP</name>
        <dbReference type="ChEBI" id="CHEBI:30616"/>
    </ligand>
</feature>
<feature type="binding site" evidence="1">
    <location>
        <begin position="397"/>
        <end position="400"/>
    </location>
    <ligand>
        <name>ATP</name>
        <dbReference type="ChEBI" id="CHEBI:30616"/>
    </ligand>
</feature>
<feature type="binding site" evidence="1">
    <location>
        <position position="499"/>
    </location>
    <ligand>
        <name>ATP</name>
        <dbReference type="ChEBI" id="CHEBI:30616"/>
    </ligand>
</feature>
<feature type="binding site" evidence="1">
    <location>
        <position position="499"/>
    </location>
    <ligand>
        <name>D-alanine</name>
        <dbReference type="ChEBI" id="CHEBI:57416"/>
    </ligand>
</feature>
<keyword id="KW-0067">ATP-binding</keyword>
<keyword id="KW-0963">Cytoplasm</keyword>
<keyword id="KW-0436">Ligase</keyword>
<keyword id="KW-0547">Nucleotide-binding</keyword>
<comment type="function">
    <text evidence="1">Catalyzes the first step in the D-alanylation of lipoteichoic acid (LTA), the activation of D-alanine and its transfer onto the D-alanyl carrier protein (Dcp) DltC. In an ATP-dependent two-step reaction, forms a high energy D-alanyl-AMP intermediate, followed by transfer of the D-alanyl residue as a thiol ester to the phosphopantheinyl prosthetic group of the Dcp. D-alanylation of LTA plays an important role in modulating the properties of the cell wall in Gram-positive bacteria, influencing the net charge of the cell wall.</text>
</comment>
<comment type="catalytic activity">
    <reaction evidence="1">
        <text>holo-[D-alanyl-carrier protein] + D-alanine + ATP = D-alanyl-[D-alanyl-carrier protein] + AMP + diphosphate</text>
        <dbReference type="Rhea" id="RHEA:55132"/>
        <dbReference type="Rhea" id="RHEA-COMP:14102"/>
        <dbReference type="Rhea" id="RHEA-COMP:14103"/>
        <dbReference type="ChEBI" id="CHEBI:30616"/>
        <dbReference type="ChEBI" id="CHEBI:33019"/>
        <dbReference type="ChEBI" id="CHEBI:57416"/>
        <dbReference type="ChEBI" id="CHEBI:64479"/>
        <dbReference type="ChEBI" id="CHEBI:138620"/>
        <dbReference type="ChEBI" id="CHEBI:456215"/>
        <dbReference type="EC" id="6.2.1.54"/>
    </reaction>
</comment>
<comment type="pathway">
    <text evidence="1">Cell wall biogenesis; lipoteichoic acid biosynthesis.</text>
</comment>
<comment type="subcellular location">
    <subcellularLocation>
        <location evidence="1">Cytoplasm</location>
    </subcellularLocation>
</comment>
<comment type="similarity">
    <text evidence="1">Belongs to the ATP-dependent AMP-binding enzyme family. DltA subfamily.</text>
</comment>
<gene>
    <name evidence="1" type="primary">dltA</name>
    <name type="ordered locus">MGAS10750_Spy1166</name>
</gene>
<name>DLTA_STRPF</name>
<accession>Q1J667</accession>
<evidence type="ECO:0000255" key="1">
    <source>
        <dbReference type="HAMAP-Rule" id="MF_00593"/>
    </source>
</evidence>
<reference key="1">
    <citation type="journal article" date="2006" name="Proc. Natl. Acad. Sci. U.S.A.">
        <title>Molecular genetic anatomy of inter- and intraserotype variation in the human bacterial pathogen group A Streptococcus.</title>
        <authorList>
            <person name="Beres S.B."/>
            <person name="Richter E.W."/>
            <person name="Nagiec M.J."/>
            <person name="Sumby P."/>
            <person name="Porcella S.F."/>
            <person name="DeLeo F.R."/>
            <person name="Musser J.M."/>
        </authorList>
    </citation>
    <scope>NUCLEOTIDE SEQUENCE [LARGE SCALE GENOMIC DNA]</scope>
    <source>
        <strain>MGAS10750</strain>
    </source>
</reference>
<organism>
    <name type="scientific">Streptococcus pyogenes serotype M4 (strain MGAS10750)</name>
    <dbReference type="NCBI Taxonomy" id="370554"/>
    <lineage>
        <taxon>Bacteria</taxon>
        <taxon>Bacillati</taxon>
        <taxon>Bacillota</taxon>
        <taxon>Bacilli</taxon>
        <taxon>Lactobacillales</taxon>
        <taxon>Streptococcaceae</taxon>
        <taxon>Streptococcus</taxon>
    </lineage>
</organism>
<protein>
    <recommendedName>
        <fullName evidence="1">D-alanine--D-alanyl carrier protein ligase</fullName>
        <shortName evidence="1">DCL</shortName>
        <ecNumber evidence="1">6.2.1.54</ecNumber>
    </recommendedName>
    <alternativeName>
        <fullName evidence="1">D-alanine--poly(phosphoribitol) ligase subunit 1</fullName>
    </alternativeName>
    <alternativeName>
        <fullName evidence="1">D-alanine-activating enzyme</fullName>
        <shortName evidence="1">DAE</shortName>
    </alternativeName>
</protein>
<proteinExistence type="inferred from homology"/>